<organism>
    <name type="scientific">Influenza A virus (strain A/USA:Memphis/10/1996 H1N1)</name>
    <dbReference type="NCBI Taxonomy" id="416730"/>
    <lineage>
        <taxon>Viruses</taxon>
        <taxon>Riboviria</taxon>
        <taxon>Orthornavirae</taxon>
        <taxon>Negarnaviricota</taxon>
        <taxon>Polyploviricotina</taxon>
        <taxon>Insthoviricetes</taxon>
        <taxon>Articulavirales</taxon>
        <taxon>Orthomyxoviridae</taxon>
        <taxon>Alphainfluenzavirus</taxon>
        <taxon>Alphainfluenzavirus influenzae</taxon>
        <taxon>Influenza A virus</taxon>
    </lineage>
</organism>
<protein>
    <recommendedName>
        <fullName evidence="1">Neuraminidase</fullName>
        <ecNumber evidence="1">3.2.1.18</ecNumber>
    </recommendedName>
</protein>
<proteinExistence type="inferred from homology"/>
<gene>
    <name evidence="1" type="primary">NA</name>
</gene>
<feature type="chain" id="PRO_0000372975" description="Neuraminidase">
    <location>
        <begin position="1"/>
        <end position="470"/>
    </location>
</feature>
<feature type="topological domain" description="Intravirion" evidence="1">
    <location>
        <begin position="1"/>
        <end position="6"/>
    </location>
</feature>
<feature type="transmembrane region" description="Helical" evidence="1">
    <location>
        <begin position="7"/>
        <end position="27"/>
    </location>
</feature>
<feature type="topological domain" description="Virion surface" evidence="1">
    <location>
        <begin position="28"/>
        <end position="470"/>
    </location>
</feature>
<feature type="region of interest" description="Involved in apical transport and lipid raft association" evidence="1">
    <location>
        <begin position="11"/>
        <end position="33"/>
    </location>
</feature>
<feature type="region of interest" description="Hypervariable stalk region" evidence="1">
    <location>
        <begin position="36"/>
        <end position="90"/>
    </location>
</feature>
<feature type="region of interest" description="Head of neuraminidase" evidence="1">
    <location>
        <begin position="91"/>
        <end position="470"/>
    </location>
</feature>
<feature type="active site" description="Proton donor/acceptor" evidence="1">
    <location>
        <position position="151"/>
    </location>
</feature>
<feature type="active site" description="Nucleophile" evidence="1">
    <location>
        <position position="402"/>
    </location>
</feature>
<feature type="binding site" evidence="1">
    <location>
        <position position="118"/>
    </location>
    <ligand>
        <name>substrate</name>
    </ligand>
</feature>
<feature type="binding site" evidence="1">
    <location>
        <position position="152"/>
    </location>
    <ligand>
        <name>substrate</name>
    </ligand>
</feature>
<feature type="binding site" evidence="1">
    <location>
        <begin position="277"/>
        <end position="278"/>
    </location>
    <ligand>
        <name>substrate</name>
    </ligand>
</feature>
<feature type="binding site" evidence="1">
    <location>
        <position position="293"/>
    </location>
    <ligand>
        <name>substrate</name>
    </ligand>
</feature>
<feature type="binding site" evidence="1">
    <location>
        <position position="294"/>
    </location>
    <ligand>
        <name>Ca(2+)</name>
        <dbReference type="ChEBI" id="CHEBI:29108"/>
    </ligand>
</feature>
<feature type="binding site" evidence="1">
    <location>
        <position position="298"/>
    </location>
    <ligand>
        <name>Ca(2+)</name>
        <dbReference type="ChEBI" id="CHEBI:29108"/>
    </ligand>
</feature>
<feature type="binding site" evidence="1">
    <location>
        <position position="324"/>
    </location>
    <ligand>
        <name>Ca(2+)</name>
        <dbReference type="ChEBI" id="CHEBI:29108"/>
    </ligand>
</feature>
<feature type="binding site" evidence="1">
    <location>
        <position position="368"/>
    </location>
    <ligand>
        <name>substrate</name>
    </ligand>
</feature>
<feature type="glycosylation site" description="N-linked (GlcNAc...) asparagine; by host" evidence="1">
    <location>
        <position position="44"/>
    </location>
</feature>
<feature type="glycosylation site" description="N-linked (GlcNAc...) asparagine; by host" evidence="1">
    <location>
        <position position="58"/>
    </location>
</feature>
<feature type="glycosylation site" description="N-linked (GlcNAc...) asparagine; by host" evidence="1">
    <location>
        <position position="63"/>
    </location>
</feature>
<feature type="glycosylation site" description="N-linked (GlcNAc...) asparagine; by host" evidence="1">
    <location>
        <position position="70"/>
    </location>
</feature>
<feature type="glycosylation site" description="N-linked (GlcNAc...) asparagine; by host" evidence="1">
    <location>
        <position position="88"/>
    </location>
</feature>
<feature type="glycosylation site" description="N-linked (GlcNAc...) asparagine; by host" evidence="1">
    <location>
        <position position="146"/>
    </location>
</feature>
<feature type="glycosylation site" description="N-linked (GlcNAc...) asparagine; by host" evidence="1">
    <location>
        <position position="235"/>
    </location>
</feature>
<feature type="glycosylation site" description="N-linked (GlcNAc...) asparagine; by host" evidence="1">
    <location>
        <position position="434"/>
    </location>
</feature>
<feature type="glycosylation site" description="N-linked (GlcNAc...) asparagine; by host" evidence="1">
    <location>
        <position position="455"/>
    </location>
</feature>
<feature type="disulfide bond" evidence="1">
    <location>
        <begin position="92"/>
        <end position="417"/>
    </location>
</feature>
<feature type="disulfide bond" evidence="1">
    <location>
        <begin position="124"/>
        <end position="129"/>
    </location>
</feature>
<feature type="disulfide bond" evidence="1">
    <location>
        <begin position="184"/>
        <end position="231"/>
    </location>
</feature>
<feature type="disulfide bond" evidence="1">
    <location>
        <begin position="233"/>
        <end position="238"/>
    </location>
</feature>
<feature type="disulfide bond" evidence="1">
    <location>
        <begin position="279"/>
        <end position="292"/>
    </location>
</feature>
<feature type="disulfide bond" evidence="1">
    <location>
        <begin position="281"/>
        <end position="290"/>
    </location>
</feature>
<feature type="disulfide bond" evidence="1">
    <location>
        <begin position="318"/>
        <end position="335"/>
    </location>
</feature>
<feature type="disulfide bond" evidence="1">
    <location>
        <begin position="421"/>
        <end position="447"/>
    </location>
</feature>
<reference key="1">
    <citation type="submission" date="2007-02" db="EMBL/GenBank/DDBJ databases">
        <title>The NIAID influenza genome sequencing project.</title>
        <authorList>
            <person name="Ghedin E."/>
            <person name="Spiro D."/>
            <person name="Miller N."/>
            <person name="Zaborsky J."/>
            <person name="Feldblyum T."/>
            <person name="Subbu V."/>
            <person name="Shumway M."/>
            <person name="Sparenborg J."/>
            <person name="Groveman L."/>
            <person name="Halpin R."/>
            <person name="Sitz J."/>
            <person name="Koo H."/>
            <person name="Salzberg S.L."/>
            <person name="Webster R.G."/>
            <person name="Hoffmann E."/>
            <person name="Krauss S."/>
            <person name="Naeve C."/>
            <person name="Bao Y."/>
            <person name="Bolotov P."/>
            <person name="Dernovoy D."/>
            <person name="Kiryutin B."/>
            <person name="Lipman D.J."/>
            <person name="Tatusova T."/>
        </authorList>
    </citation>
    <scope>NUCLEOTIDE SEQUENCE [GENOMIC RNA]</scope>
</reference>
<reference key="2">
    <citation type="submission" date="2007-02" db="EMBL/GenBank/DDBJ databases">
        <authorList>
            <consortium name="The NIAID Influenza Genome Sequencing Consortium"/>
        </authorList>
    </citation>
    <scope>NUCLEOTIDE SEQUENCE [GENOMIC RNA]</scope>
</reference>
<keyword id="KW-0106">Calcium</keyword>
<keyword id="KW-1015">Disulfide bond</keyword>
<keyword id="KW-0325">Glycoprotein</keyword>
<keyword id="KW-0326">Glycosidase</keyword>
<keyword id="KW-1032">Host cell membrane</keyword>
<keyword id="KW-1043">Host membrane</keyword>
<keyword id="KW-0378">Hydrolase</keyword>
<keyword id="KW-0472">Membrane</keyword>
<keyword id="KW-0479">Metal-binding</keyword>
<keyword id="KW-0735">Signal-anchor</keyword>
<keyword id="KW-0812">Transmembrane</keyword>
<keyword id="KW-1133">Transmembrane helix</keyword>
<keyword id="KW-0946">Virion</keyword>
<accession>A3DRP3</accession>
<sequence>MNPNQKIITIGSISIAIGIISLILQIGNIISIWASHSIQTGSQNHTGICNQRIITYENSTWVNQTYVNINNTNVVAGKDKTSMTLAGNSSLCPIRGWAIYTKDNSIRIGSKGDVFVIREPFISCSHLECRTFFLTQGALLNDKHSNGTVKDRSPYRALMSCPLGEAPSPYNSRFESVAWSASACHDGLGWLTIGISGPDNGAVAVLKYNGIITETIKSWKKRILRTQESECVCMNGSCFTIMTDGPSNGAASYRIFKIEKGRVTKSIELDAPNYHYEECSCYPDTGTVMCVCRDNWHGSNRPWVSFNQNLDYQIGYICSGVFGDNPRPKDGEGSCNPVTVDGADGVKGFSYRYGNGVWIGRTKSNRLRKGFEMIWDPNGWTDTDSDFSMKQDIVAMTDWSGYSGSFVQHPELTGLDCMRPCFWVELVRGLPRENTTIWTSGSSISFCGVNSDTANWSWPDGAELPFTIDK</sequence>
<name>NRAM_I96A2</name>
<evidence type="ECO:0000255" key="1">
    <source>
        <dbReference type="HAMAP-Rule" id="MF_04071"/>
    </source>
</evidence>
<comment type="function">
    <text evidence="1">Catalyzes the removal of terminal sialic acid residues from viral and cellular glycoconjugates. Cleaves off the terminal sialic acids on the glycosylated HA during virus budding to facilitate virus release. Additionally helps virus spread through the circulation by further removing sialic acids from the cell surface. These cleavages prevent self-aggregation and ensure the efficient spread of the progeny virus from cell to cell. Otherwise, infection would be limited to one round of replication. Described as a receptor-destroying enzyme because it cleaves a terminal sialic acid from the cellular receptors. May facilitate viral invasion of the upper airways by cleaving the sialic acid moieties on the mucin of the airway epithelial cells. Likely to plays a role in the budding process through its association with lipid rafts during intracellular transport. May additionally display a raft-association independent effect on budding. Plays a role in the determination of host range restriction on replication and virulence. Sialidase activity in late endosome/lysosome traffic seems to enhance virus replication.</text>
</comment>
<comment type="catalytic activity">
    <reaction evidence="1">
        <text>Hydrolysis of alpha-(2-&gt;3)-, alpha-(2-&gt;6)-, alpha-(2-&gt;8)- glycosidic linkages of terminal sialic acid residues in oligosaccharides, glycoproteins, glycolipids, colominic acid and synthetic substrates.</text>
        <dbReference type="EC" id="3.2.1.18"/>
    </reaction>
</comment>
<comment type="cofactor">
    <cofactor evidence="1">
        <name>Ca(2+)</name>
        <dbReference type="ChEBI" id="CHEBI:29108"/>
    </cofactor>
</comment>
<comment type="activity regulation">
    <text evidence="1">Inhibited by the neuraminidase inhibitors zanamivir (Relenza) and oseltamivir (Tamiflu). These drugs interfere with the release of progeny virus from infected cells and are effective against all influenza strains. Resistance to neuraminidase inhibitors is quite rare.</text>
</comment>
<comment type="subunit">
    <text evidence="1">Homotetramer.</text>
</comment>
<comment type="subcellular location">
    <subcellularLocation>
        <location evidence="1">Virion membrane</location>
    </subcellularLocation>
    <subcellularLocation>
        <location evidence="1">Host apical cell membrane</location>
        <topology evidence="1">Single-pass type II membrane protein</topology>
    </subcellularLocation>
    <text evidence="1">Preferentially accumulates at the apical plasma membrane in infected polarized epithelial cells, which is the virus assembly site. Uses lipid rafts for cell surface transport and apical sorting. In the virion, forms a mushroom-shaped spike on the surface of the membrane.</text>
</comment>
<comment type="domain">
    <text evidence="1">Intact N-terminus is essential for virion morphogenesis. Possesses two apical sorting signals, one in the ectodomain, which is likely to be a glycan, and the other in the transmembrane domain. The transmembrane domain also plays a role in lipid raft association.</text>
</comment>
<comment type="PTM">
    <text evidence="1">N-glycosylated.</text>
</comment>
<comment type="miscellaneous">
    <text>The influenza A genome consist of 8 RNA segments. Genetic variation of hemagglutinin and/or neuraminidase genes results in the emergence of new influenza strains. The mechanism of variation can be the result of point mutations or the result of genetic reassortment between segments of two different strains.</text>
</comment>
<comment type="similarity">
    <text evidence="1">Belongs to the glycosyl hydrolase 34 family.</text>
</comment>
<dbReference type="EC" id="3.2.1.18" evidence="1"/>
<dbReference type="EMBL" id="CY019797">
    <property type="protein sequence ID" value="ABN50965.1"/>
    <property type="molecule type" value="Viral_cRNA"/>
</dbReference>
<dbReference type="SMR" id="A3DRP3"/>
<dbReference type="CAZy" id="GH34">
    <property type="family name" value="Glycoside Hydrolase Family 34"/>
</dbReference>
<dbReference type="GlyCosmos" id="A3DRP3">
    <property type="glycosylation" value="9 sites, No reported glycans"/>
</dbReference>
<dbReference type="PRO" id="PR:A3DRP3"/>
<dbReference type="Proteomes" id="UP000007557">
    <property type="component" value="Genome"/>
</dbReference>
<dbReference type="GO" id="GO:0020002">
    <property type="term" value="C:host cell plasma membrane"/>
    <property type="evidence" value="ECO:0007669"/>
    <property type="project" value="UniProtKB-SubCell"/>
</dbReference>
<dbReference type="GO" id="GO:0016020">
    <property type="term" value="C:membrane"/>
    <property type="evidence" value="ECO:0007669"/>
    <property type="project" value="UniProtKB-UniRule"/>
</dbReference>
<dbReference type="GO" id="GO:0055036">
    <property type="term" value="C:virion membrane"/>
    <property type="evidence" value="ECO:0007669"/>
    <property type="project" value="UniProtKB-SubCell"/>
</dbReference>
<dbReference type="GO" id="GO:0004308">
    <property type="term" value="F:exo-alpha-sialidase activity"/>
    <property type="evidence" value="ECO:0007669"/>
    <property type="project" value="UniProtKB-UniRule"/>
</dbReference>
<dbReference type="GO" id="GO:0046872">
    <property type="term" value="F:metal ion binding"/>
    <property type="evidence" value="ECO:0007669"/>
    <property type="project" value="UniProtKB-UniRule"/>
</dbReference>
<dbReference type="GO" id="GO:0005975">
    <property type="term" value="P:carbohydrate metabolic process"/>
    <property type="evidence" value="ECO:0007669"/>
    <property type="project" value="InterPro"/>
</dbReference>
<dbReference type="GO" id="GO:0046761">
    <property type="term" value="P:viral budding from plasma membrane"/>
    <property type="evidence" value="ECO:0007669"/>
    <property type="project" value="UniProtKB-UniRule"/>
</dbReference>
<dbReference type="CDD" id="cd15483">
    <property type="entry name" value="Influenza_NA"/>
    <property type="match status" value="1"/>
</dbReference>
<dbReference type="FunFam" id="2.120.10.10:FF:000001">
    <property type="entry name" value="Neuraminidase"/>
    <property type="match status" value="1"/>
</dbReference>
<dbReference type="Gene3D" id="2.120.10.10">
    <property type="match status" value="1"/>
</dbReference>
<dbReference type="HAMAP" id="MF_04071">
    <property type="entry name" value="INFV_NRAM"/>
    <property type="match status" value="1"/>
</dbReference>
<dbReference type="InterPro" id="IPR001860">
    <property type="entry name" value="Glyco_hydro_34"/>
</dbReference>
<dbReference type="InterPro" id="IPR033654">
    <property type="entry name" value="Sialidase_Influenza_A/B"/>
</dbReference>
<dbReference type="InterPro" id="IPR036278">
    <property type="entry name" value="Sialidase_sf"/>
</dbReference>
<dbReference type="Pfam" id="PF00064">
    <property type="entry name" value="Neur"/>
    <property type="match status" value="1"/>
</dbReference>
<dbReference type="SUPFAM" id="SSF50939">
    <property type="entry name" value="Sialidases"/>
    <property type="match status" value="1"/>
</dbReference>
<organismHost>
    <name type="scientific">Aves</name>
    <dbReference type="NCBI Taxonomy" id="8782"/>
</organismHost>
<organismHost>
    <name type="scientific">Homo sapiens</name>
    <name type="common">Human</name>
    <dbReference type="NCBI Taxonomy" id="9606"/>
</organismHost>
<organismHost>
    <name type="scientific">Sus scrofa</name>
    <name type="common">Pig</name>
    <dbReference type="NCBI Taxonomy" id="9823"/>
</organismHost>